<reference key="1">
    <citation type="submission" date="2008-05" db="EMBL/GenBank/DDBJ databases">
        <title>Complete sequence of Shigella boydii serotype 18 strain BS512.</title>
        <authorList>
            <person name="Rasko D.A."/>
            <person name="Rosovitz M."/>
            <person name="Maurelli A.T."/>
            <person name="Myers G."/>
            <person name="Seshadri R."/>
            <person name="Cer R."/>
            <person name="Jiang L."/>
            <person name="Ravel J."/>
            <person name="Sebastian Y."/>
        </authorList>
    </citation>
    <scope>NUCLEOTIDE SEQUENCE [LARGE SCALE GENOMIC DNA]</scope>
    <source>
        <strain>CDC 3083-94 / BS512</strain>
    </source>
</reference>
<proteinExistence type="inferred from homology"/>
<evidence type="ECO:0000250" key="1">
    <source>
        <dbReference type="UniProtKB" id="P50389"/>
    </source>
</evidence>
<evidence type="ECO:0000255" key="2">
    <source>
        <dbReference type="HAMAP-Rule" id="MF_01627"/>
    </source>
</evidence>
<dbReference type="EC" id="2.4.2.1" evidence="2"/>
<dbReference type="EMBL" id="CP001063">
    <property type="protein sequence ID" value="ACD09228.1"/>
    <property type="molecule type" value="Genomic_DNA"/>
</dbReference>
<dbReference type="RefSeq" id="WP_000224877.1">
    <property type="nucleotide sequence ID" value="NC_010658.1"/>
</dbReference>
<dbReference type="SMR" id="B2TZR7"/>
<dbReference type="STRING" id="344609.SbBS512_E4931"/>
<dbReference type="GeneID" id="93777460"/>
<dbReference type="KEGG" id="sbc:SbBS512_E4931"/>
<dbReference type="HOGENOM" id="CLU_068457_2_0_6"/>
<dbReference type="Proteomes" id="UP000001030">
    <property type="component" value="Chromosome"/>
</dbReference>
<dbReference type="GO" id="GO:0005829">
    <property type="term" value="C:cytosol"/>
    <property type="evidence" value="ECO:0007669"/>
    <property type="project" value="TreeGrafter"/>
</dbReference>
<dbReference type="GO" id="GO:0004731">
    <property type="term" value="F:purine-nucleoside phosphorylase activity"/>
    <property type="evidence" value="ECO:0007669"/>
    <property type="project" value="UniProtKB-UniRule"/>
</dbReference>
<dbReference type="GO" id="GO:0006152">
    <property type="term" value="P:purine nucleoside catabolic process"/>
    <property type="evidence" value="ECO:0007669"/>
    <property type="project" value="TreeGrafter"/>
</dbReference>
<dbReference type="CDD" id="cd09006">
    <property type="entry name" value="PNP_EcPNPI-like"/>
    <property type="match status" value="1"/>
</dbReference>
<dbReference type="FunFam" id="3.40.50.1580:FF:000002">
    <property type="entry name" value="Purine nucleoside phosphorylase DeoD-type"/>
    <property type="match status" value="1"/>
</dbReference>
<dbReference type="Gene3D" id="3.40.50.1580">
    <property type="entry name" value="Nucleoside phosphorylase domain"/>
    <property type="match status" value="1"/>
</dbReference>
<dbReference type="HAMAP" id="MF_01627">
    <property type="entry name" value="Pur_nucleosid_phosp"/>
    <property type="match status" value="1"/>
</dbReference>
<dbReference type="InterPro" id="IPR004402">
    <property type="entry name" value="DeoD-type"/>
</dbReference>
<dbReference type="InterPro" id="IPR018016">
    <property type="entry name" value="Nucleoside_phosphorylase_CS"/>
</dbReference>
<dbReference type="InterPro" id="IPR000845">
    <property type="entry name" value="Nucleoside_phosphorylase_d"/>
</dbReference>
<dbReference type="InterPro" id="IPR035994">
    <property type="entry name" value="Nucleoside_phosphorylase_sf"/>
</dbReference>
<dbReference type="NCBIfam" id="TIGR00107">
    <property type="entry name" value="deoD"/>
    <property type="match status" value="1"/>
</dbReference>
<dbReference type="NCBIfam" id="NF004489">
    <property type="entry name" value="PRK05819.1"/>
    <property type="match status" value="1"/>
</dbReference>
<dbReference type="NCBIfam" id="NF009914">
    <property type="entry name" value="PRK13374.1"/>
    <property type="match status" value="1"/>
</dbReference>
<dbReference type="PANTHER" id="PTHR43691:SF2">
    <property type="entry name" value="PURINE NUCLEOSIDE PHOSPHORYLASE DEOD-TYPE"/>
    <property type="match status" value="1"/>
</dbReference>
<dbReference type="PANTHER" id="PTHR43691">
    <property type="entry name" value="URIDINE PHOSPHORYLASE"/>
    <property type="match status" value="1"/>
</dbReference>
<dbReference type="Pfam" id="PF01048">
    <property type="entry name" value="PNP_UDP_1"/>
    <property type="match status" value="1"/>
</dbReference>
<dbReference type="SUPFAM" id="SSF53167">
    <property type="entry name" value="Purine and uridine phosphorylases"/>
    <property type="match status" value="1"/>
</dbReference>
<dbReference type="PROSITE" id="PS01232">
    <property type="entry name" value="PNP_UDP_1"/>
    <property type="match status" value="1"/>
</dbReference>
<accession>B2TZR7</accession>
<organism>
    <name type="scientific">Shigella boydii serotype 18 (strain CDC 3083-94 / BS512)</name>
    <dbReference type="NCBI Taxonomy" id="344609"/>
    <lineage>
        <taxon>Bacteria</taxon>
        <taxon>Pseudomonadati</taxon>
        <taxon>Pseudomonadota</taxon>
        <taxon>Gammaproteobacteria</taxon>
        <taxon>Enterobacterales</taxon>
        <taxon>Enterobacteriaceae</taxon>
        <taxon>Shigella</taxon>
    </lineage>
</organism>
<keyword id="KW-0007">Acetylation</keyword>
<keyword id="KW-0328">Glycosyltransferase</keyword>
<keyword id="KW-1185">Reference proteome</keyword>
<keyword id="KW-0808">Transferase</keyword>
<name>DEOD_SHIB3</name>
<feature type="chain" id="PRO_1000186223" description="Purine nucleoside phosphorylase DeoD-type">
    <location>
        <begin position="1"/>
        <end position="239"/>
    </location>
</feature>
<feature type="active site" description="Proton donor" evidence="2">
    <location>
        <position position="205"/>
    </location>
</feature>
<feature type="binding site" evidence="1">
    <location>
        <position position="5"/>
    </location>
    <ligand>
        <name>a purine D-ribonucleoside</name>
        <dbReference type="ChEBI" id="CHEBI:142355"/>
        <note>ligand shared between dimeric partners</note>
    </ligand>
</feature>
<feature type="binding site" description="in other chain" evidence="1">
    <location>
        <position position="21"/>
    </location>
    <ligand>
        <name>phosphate</name>
        <dbReference type="ChEBI" id="CHEBI:43474"/>
        <note>ligand shared between dimeric partners</note>
    </ligand>
</feature>
<feature type="binding site" description="in other chain" evidence="1">
    <location>
        <position position="25"/>
    </location>
    <ligand>
        <name>phosphate</name>
        <dbReference type="ChEBI" id="CHEBI:43474"/>
        <note>ligand shared between dimeric partners</note>
    </ligand>
</feature>
<feature type="binding site" evidence="1">
    <location>
        <position position="44"/>
    </location>
    <ligand>
        <name>phosphate</name>
        <dbReference type="ChEBI" id="CHEBI:43474"/>
        <note>ligand shared between dimeric partners</note>
    </ligand>
</feature>
<feature type="binding site" description="in other chain" evidence="1">
    <location>
        <begin position="88"/>
        <end position="91"/>
    </location>
    <ligand>
        <name>phosphate</name>
        <dbReference type="ChEBI" id="CHEBI:43474"/>
        <note>ligand shared between dimeric partners</note>
    </ligand>
</feature>
<feature type="binding site" description="in other chain" evidence="1">
    <location>
        <begin position="180"/>
        <end position="182"/>
    </location>
    <ligand>
        <name>a purine D-ribonucleoside</name>
        <dbReference type="ChEBI" id="CHEBI:142355"/>
        <note>ligand shared between dimeric partners</note>
    </ligand>
</feature>
<feature type="binding site" description="in other chain" evidence="1">
    <location>
        <begin position="204"/>
        <end position="205"/>
    </location>
    <ligand>
        <name>a purine D-ribonucleoside</name>
        <dbReference type="ChEBI" id="CHEBI:142355"/>
        <note>ligand shared between dimeric partners</note>
    </ligand>
</feature>
<feature type="site" description="Important for catalytic activity" evidence="2">
    <location>
        <position position="218"/>
    </location>
</feature>
<feature type="modified residue" description="N6-acetyllysine" evidence="2">
    <location>
        <position position="27"/>
    </location>
</feature>
<gene>
    <name evidence="2" type="primary">deoD</name>
    <name type="ordered locus">SbBS512_E4931</name>
</gene>
<protein>
    <recommendedName>
        <fullName evidence="2">Purine nucleoside phosphorylase DeoD-type</fullName>
        <shortName evidence="2">PNP</shortName>
        <ecNumber evidence="2">2.4.2.1</ecNumber>
    </recommendedName>
</protein>
<sequence>MATPHINAEMGDFADVVLMPGDPLRAKYIAETFLEDAREVNNVRGMLGFTGTYKGRKISVMGHGMGIPSCSIYTKELITDFGVKKIIRVGSCGAVLPHVKLRDVVIGMGACTDSKVNRIRFKDHDFAAIADFDMVRNAVDAAKALGIDARVGNLFSADLFYSPDGEMFDVMEKYGILGVEMEAAGIYGVAAEFGAKALTICTVSDHIRTHEQTTAAERQTTFNDMIKIALESVLLGDKE</sequence>
<comment type="function">
    <text evidence="2">Catalyzes the reversible phosphorolytic breakdown of the N-glycosidic bond in the beta-(deoxy)ribonucleoside molecules, with the formation of the corresponding free purine bases and pentose-1-phosphate.</text>
</comment>
<comment type="catalytic activity">
    <reaction evidence="2">
        <text>a purine D-ribonucleoside + phosphate = a purine nucleobase + alpha-D-ribose 1-phosphate</text>
        <dbReference type="Rhea" id="RHEA:19805"/>
        <dbReference type="ChEBI" id="CHEBI:26386"/>
        <dbReference type="ChEBI" id="CHEBI:43474"/>
        <dbReference type="ChEBI" id="CHEBI:57720"/>
        <dbReference type="ChEBI" id="CHEBI:142355"/>
        <dbReference type="EC" id="2.4.2.1"/>
    </reaction>
</comment>
<comment type="catalytic activity">
    <reaction evidence="2">
        <text>a purine 2'-deoxy-D-ribonucleoside + phosphate = a purine nucleobase + 2-deoxy-alpha-D-ribose 1-phosphate</text>
        <dbReference type="Rhea" id="RHEA:36431"/>
        <dbReference type="ChEBI" id="CHEBI:26386"/>
        <dbReference type="ChEBI" id="CHEBI:43474"/>
        <dbReference type="ChEBI" id="CHEBI:57259"/>
        <dbReference type="ChEBI" id="CHEBI:142361"/>
        <dbReference type="EC" id="2.4.2.1"/>
    </reaction>
</comment>
<comment type="subunit">
    <text evidence="2">Homohexamer; trimer of homodimers.</text>
</comment>
<comment type="similarity">
    <text evidence="2">Belongs to the PNP/UDP phosphorylase family.</text>
</comment>